<evidence type="ECO:0000250" key="1">
    <source>
        <dbReference type="UniProtKB" id="O00584"/>
    </source>
</evidence>
<evidence type="ECO:0000250" key="2">
    <source>
        <dbReference type="UniProtKB" id="P08056"/>
    </source>
</evidence>
<evidence type="ECO:0000255" key="3"/>
<evidence type="ECO:0000255" key="4">
    <source>
        <dbReference type="PROSITE-ProRule" id="PRU10045"/>
    </source>
</evidence>
<evidence type="ECO:0000255" key="5">
    <source>
        <dbReference type="PROSITE-ProRule" id="PRU10046"/>
    </source>
</evidence>
<evidence type="ECO:0000305" key="6"/>
<name>RNT2_PIG</name>
<accession>Q7M329</accession>
<comment type="function">
    <text evidence="1">Ribonuclease that plays an essential role in innate immune response by recognizing and degrading RNAs from microbial pathogens that are subsequently sensed by TLR8. Cleaves preferentially single-stranded RNA molecules between purine and uridine residues, which critically contributes to the supply of catabolic uridine and the generation of purine-2',3'-cyclophosphate-terminated oligoribonucleotides. In turn, RNase T2 degradation products promote the RNA-dependent activation of TLR8. In plasmacytoid dendritic cells, it cooperates with PLD3 or PLD4 5'-&gt;3' exonucleases to process RNA fragments and release 2',3'-cyclic guanosine monophosphate (2',3'-cGMP), a potent stimulatory ligand for TLR7. Also plays a key role in degradation of mitochondrial RNA and processing of non-coding RNA imported from the cytosol into mitochondria. Participates as well in degradation of mitochondrion-associated cytosolic rRNAs.</text>
</comment>
<comment type="catalytic activity">
    <reaction evidence="4">
        <text>a ribonucleotidyl-ribonucleotide-RNA + H2O = a 3'-end 3'-phospho-ribonucleotide-RNA + a 5'-end dephospho-ribonucleoside-RNA + H(+)</text>
        <dbReference type="Rhea" id="RHEA:68052"/>
        <dbReference type="Rhea" id="RHEA-COMP:10463"/>
        <dbReference type="Rhea" id="RHEA-COMP:13936"/>
        <dbReference type="Rhea" id="RHEA-COMP:17355"/>
        <dbReference type="ChEBI" id="CHEBI:15377"/>
        <dbReference type="ChEBI" id="CHEBI:15378"/>
        <dbReference type="ChEBI" id="CHEBI:83062"/>
        <dbReference type="ChEBI" id="CHEBI:138284"/>
        <dbReference type="ChEBI" id="CHEBI:173118"/>
        <dbReference type="EC" id="4.6.1.19"/>
    </reaction>
</comment>
<comment type="catalytic activity">
    <reaction evidence="1">
        <text>an adenylyl-uridine-RNA = a 3'-end 2',3'-cyclophospho-AMP-RNA + a 5'-end dephospho-uridine-RNA</text>
        <dbReference type="Rhea" id="RHEA:81383"/>
        <dbReference type="Rhea" id="RHEA-COMP:17356"/>
        <dbReference type="Rhea" id="RHEA-COMP:19675"/>
        <dbReference type="Rhea" id="RHEA-COMP:19676"/>
        <dbReference type="ChEBI" id="CHEBI:173224"/>
        <dbReference type="ChEBI" id="CHEBI:231879"/>
        <dbReference type="ChEBI" id="CHEBI:231881"/>
    </reaction>
    <physiologicalReaction direction="left-to-right" evidence="1">
        <dbReference type="Rhea" id="RHEA:81384"/>
    </physiologicalReaction>
</comment>
<comment type="catalytic activity">
    <reaction evidence="1">
        <text>a guanylyl-uridine-RNA = a 3'-end 2',3'-cyclophospho-GMP-RNA + a 5'-end dephospho-uridine-RNA</text>
        <dbReference type="Rhea" id="RHEA:81323"/>
        <dbReference type="Rhea" id="RHEA-COMP:17356"/>
        <dbReference type="Rhea" id="RHEA-COMP:19658"/>
        <dbReference type="Rhea" id="RHEA-COMP:19659"/>
        <dbReference type="ChEBI" id="CHEBI:173224"/>
        <dbReference type="ChEBI" id="CHEBI:231849"/>
        <dbReference type="ChEBI" id="CHEBI:231850"/>
    </reaction>
</comment>
<comment type="activity regulation">
    <text evidence="1">Inhibited by Zn(2+) and Cu(2+).</text>
</comment>
<comment type="subcellular location">
    <subcellularLocation>
        <location evidence="1">Secreted</location>
    </subcellularLocation>
    <subcellularLocation>
        <location evidence="1">Lysosome lumen</location>
    </subcellularLocation>
    <subcellularLocation>
        <location evidence="1">Endoplasmic reticulum lumen</location>
    </subcellularLocation>
    <subcellularLocation>
        <location evidence="1">Mitochondrion intermembrane space</location>
    </subcellularLocation>
</comment>
<comment type="similarity">
    <text evidence="6">Belongs to the RNase T2 family.</text>
</comment>
<proteinExistence type="evidence at protein level"/>
<dbReference type="EC" id="4.6.1.19" evidence="4"/>
<dbReference type="PIR" id="JE0172">
    <property type="entry name" value="JE0172"/>
</dbReference>
<dbReference type="SMR" id="Q7M329"/>
<dbReference type="FunCoup" id="Q7M329">
    <property type="interactions" value="291"/>
</dbReference>
<dbReference type="STRING" id="9823.ENSSSCP00000044946"/>
<dbReference type="GlyCosmos" id="Q7M329">
    <property type="glycosylation" value="3 sites, No reported glycans"/>
</dbReference>
<dbReference type="GlyGen" id="Q7M329">
    <property type="glycosylation" value="3 sites"/>
</dbReference>
<dbReference type="PaxDb" id="9823-ENSSSCP00000004349"/>
<dbReference type="PeptideAtlas" id="Q7M329"/>
<dbReference type="eggNOG" id="KOG1642">
    <property type="taxonomic scope" value="Eukaryota"/>
</dbReference>
<dbReference type="InParanoid" id="Q7M329"/>
<dbReference type="Proteomes" id="UP000008227">
    <property type="component" value="Unplaced"/>
</dbReference>
<dbReference type="Proteomes" id="UP000314985">
    <property type="component" value="Unplaced"/>
</dbReference>
<dbReference type="Proteomes" id="UP000694570">
    <property type="component" value="Unplaced"/>
</dbReference>
<dbReference type="Proteomes" id="UP000694571">
    <property type="component" value="Unplaced"/>
</dbReference>
<dbReference type="Proteomes" id="UP000694720">
    <property type="component" value="Unplaced"/>
</dbReference>
<dbReference type="Proteomes" id="UP000694722">
    <property type="component" value="Unplaced"/>
</dbReference>
<dbReference type="Proteomes" id="UP000694723">
    <property type="component" value="Unplaced"/>
</dbReference>
<dbReference type="Proteomes" id="UP000694724">
    <property type="component" value="Unplaced"/>
</dbReference>
<dbReference type="Proteomes" id="UP000694725">
    <property type="component" value="Unplaced"/>
</dbReference>
<dbReference type="Proteomes" id="UP000694726">
    <property type="component" value="Unplaced"/>
</dbReference>
<dbReference type="Proteomes" id="UP000694727">
    <property type="component" value="Unplaced"/>
</dbReference>
<dbReference type="Proteomes" id="UP000694728">
    <property type="component" value="Unplaced"/>
</dbReference>
<dbReference type="GO" id="GO:0005788">
    <property type="term" value="C:endoplasmic reticulum lumen"/>
    <property type="evidence" value="ECO:0000250"/>
    <property type="project" value="UniProtKB"/>
</dbReference>
<dbReference type="GO" id="GO:0005576">
    <property type="term" value="C:extracellular region"/>
    <property type="evidence" value="ECO:0000318"/>
    <property type="project" value="GO_Central"/>
</dbReference>
<dbReference type="GO" id="GO:0005615">
    <property type="term" value="C:extracellular space"/>
    <property type="evidence" value="ECO:0000250"/>
    <property type="project" value="UniProtKB"/>
</dbReference>
<dbReference type="GO" id="GO:0043202">
    <property type="term" value="C:lysosomal lumen"/>
    <property type="evidence" value="ECO:0007669"/>
    <property type="project" value="UniProtKB-SubCell"/>
</dbReference>
<dbReference type="GO" id="GO:0005764">
    <property type="term" value="C:lysosome"/>
    <property type="evidence" value="ECO:0000250"/>
    <property type="project" value="UniProtKB"/>
</dbReference>
<dbReference type="GO" id="GO:0005758">
    <property type="term" value="C:mitochondrial intermembrane space"/>
    <property type="evidence" value="ECO:0007669"/>
    <property type="project" value="UniProtKB-SubCell"/>
</dbReference>
<dbReference type="GO" id="GO:0033897">
    <property type="term" value="F:ribonuclease T2 activity"/>
    <property type="evidence" value="ECO:0007669"/>
    <property type="project" value="UniProtKB-EC"/>
</dbReference>
<dbReference type="GO" id="GO:0003723">
    <property type="term" value="F:RNA binding"/>
    <property type="evidence" value="ECO:0007669"/>
    <property type="project" value="InterPro"/>
</dbReference>
<dbReference type="GO" id="GO:0004521">
    <property type="term" value="F:RNA endonuclease activity"/>
    <property type="evidence" value="ECO:0000318"/>
    <property type="project" value="GO_Central"/>
</dbReference>
<dbReference type="GO" id="GO:0004540">
    <property type="term" value="F:RNA nuclease activity"/>
    <property type="evidence" value="ECO:0000250"/>
    <property type="project" value="UniProtKB"/>
</dbReference>
<dbReference type="GO" id="GO:0045087">
    <property type="term" value="P:innate immune response"/>
    <property type="evidence" value="ECO:0007669"/>
    <property type="project" value="UniProtKB-KW"/>
</dbReference>
<dbReference type="GO" id="GO:0006401">
    <property type="term" value="P:RNA catabolic process"/>
    <property type="evidence" value="ECO:0000250"/>
    <property type="project" value="UniProtKB"/>
</dbReference>
<dbReference type="CDD" id="cd01061">
    <property type="entry name" value="RNase_T2_euk"/>
    <property type="match status" value="1"/>
</dbReference>
<dbReference type="FunFam" id="3.90.730.10:FF:000001">
    <property type="entry name" value="Ribonuclease T2"/>
    <property type="match status" value="1"/>
</dbReference>
<dbReference type="Gene3D" id="3.90.730.10">
    <property type="entry name" value="Ribonuclease T2-like"/>
    <property type="match status" value="1"/>
</dbReference>
<dbReference type="InterPro" id="IPR033697">
    <property type="entry name" value="Ribonuclease_T2_eukaryotic"/>
</dbReference>
<dbReference type="InterPro" id="IPR001568">
    <property type="entry name" value="RNase_T2-like"/>
</dbReference>
<dbReference type="InterPro" id="IPR036430">
    <property type="entry name" value="RNase_T2-like_sf"/>
</dbReference>
<dbReference type="InterPro" id="IPR018188">
    <property type="entry name" value="RNase_T2_His_AS_1"/>
</dbReference>
<dbReference type="InterPro" id="IPR033130">
    <property type="entry name" value="RNase_T2_His_AS_2"/>
</dbReference>
<dbReference type="PANTHER" id="PTHR11240">
    <property type="entry name" value="RIBONUCLEASE T2"/>
    <property type="match status" value="1"/>
</dbReference>
<dbReference type="PANTHER" id="PTHR11240:SF22">
    <property type="entry name" value="RIBONUCLEASE T2"/>
    <property type="match status" value="1"/>
</dbReference>
<dbReference type="Pfam" id="PF00445">
    <property type="entry name" value="Ribonuclease_T2"/>
    <property type="match status" value="1"/>
</dbReference>
<dbReference type="SUPFAM" id="SSF55895">
    <property type="entry name" value="Ribonuclease Rh-like"/>
    <property type="match status" value="1"/>
</dbReference>
<dbReference type="PROSITE" id="PS00530">
    <property type="entry name" value="RNASE_T2_1"/>
    <property type="match status" value="1"/>
</dbReference>
<dbReference type="PROSITE" id="PS00531">
    <property type="entry name" value="RNASE_T2_2"/>
    <property type="match status" value="1"/>
</dbReference>
<protein>
    <recommendedName>
        <fullName>Ribonuclease T2</fullName>
        <ecNumber evidence="4">4.6.1.19</ecNumber>
    </recommendedName>
</protein>
<gene>
    <name type="primary">RNASET2</name>
</gene>
<sequence length="200" mass="23136">HEWKKLIMVHHWPMTVCNEKNCEHPPDYWTIHGLWPDKSGECNRSWPFNPDEIKGLLPDMRLYWPDVLHSSPNHSVHFWRHEWEKHGTCAAQLDALNSQRKYFGKTLDLYKELALNSTLQKLGIKPSISYYQISDIKHALVGVYGVVPKVQCLPPKSGEKVQTLGQIELCLTRDLQLQDCPEPGLEICEDGPVFYPPPKE</sequence>
<reference key="1">
    <citation type="journal article" date="1998" name="Biol. Pharm. Bull.">
        <title>A protease sensitive region of plant and aminal ribonucleases belonging to the RNase T2 family.</title>
        <authorList>
            <person name="Iwama M."/>
            <person name="Kusano A."/>
            <person name="Ogawa Y."/>
            <person name="Ohgi K."/>
            <person name="Irie M."/>
        </authorList>
    </citation>
    <scope>PROTEIN SEQUENCE</scope>
    <source>
        <tissue>Spleen</tissue>
    </source>
</reference>
<keyword id="KW-0903">Direct protein sequencing</keyword>
<keyword id="KW-1015">Disulfide bond</keyword>
<keyword id="KW-0255">Endonuclease</keyword>
<keyword id="KW-0256">Endoplasmic reticulum</keyword>
<keyword id="KW-0325">Glycoprotein</keyword>
<keyword id="KW-0378">Hydrolase</keyword>
<keyword id="KW-0391">Immunity</keyword>
<keyword id="KW-0399">Innate immunity</keyword>
<keyword id="KW-0456">Lyase</keyword>
<keyword id="KW-0458">Lysosome</keyword>
<keyword id="KW-0496">Mitochondrion</keyword>
<keyword id="KW-0540">Nuclease</keyword>
<keyword id="KW-1185">Reference proteome</keyword>
<keyword id="KW-0964">Secreted</keyword>
<feature type="chain" id="PRO_0000206509" description="Ribonuclease T2">
    <location>
        <begin position="1"/>
        <end position="200"/>
    </location>
</feature>
<feature type="active site" evidence="4">
    <location>
        <position position="32"/>
    </location>
</feature>
<feature type="active site" evidence="2">
    <location>
        <position position="82"/>
    </location>
</feature>
<feature type="active site" evidence="5">
    <location>
        <position position="86"/>
    </location>
</feature>
<feature type="glycosylation site" description="N-linked (GlcNAc...) asparagine" evidence="3">
    <location>
        <position position="43"/>
    </location>
</feature>
<feature type="glycosylation site" description="N-linked (GlcNAc...) asparagine" evidence="3">
    <location>
        <position position="73"/>
    </location>
</feature>
<feature type="glycosylation site" description="N-linked (GlcNAc...) asparagine" evidence="3">
    <location>
        <position position="116"/>
    </location>
</feature>
<feature type="disulfide bond" evidence="1">
    <location>
        <begin position="17"/>
        <end position="22"/>
    </location>
</feature>
<feature type="disulfide bond" evidence="1">
    <location>
        <begin position="42"/>
        <end position="89"/>
    </location>
</feature>
<feature type="disulfide bond" evidence="1">
    <location>
        <begin position="152"/>
        <end position="188"/>
    </location>
</feature>
<feature type="disulfide bond" evidence="1">
    <location>
        <begin position="170"/>
        <end position="180"/>
    </location>
</feature>
<organism>
    <name type="scientific">Sus scrofa</name>
    <name type="common">Pig</name>
    <dbReference type="NCBI Taxonomy" id="9823"/>
    <lineage>
        <taxon>Eukaryota</taxon>
        <taxon>Metazoa</taxon>
        <taxon>Chordata</taxon>
        <taxon>Craniata</taxon>
        <taxon>Vertebrata</taxon>
        <taxon>Euteleostomi</taxon>
        <taxon>Mammalia</taxon>
        <taxon>Eutheria</taxon>
        <taxon>Laurasiatheria</taxon>
        <taxon>Artiodactyla</taxon>
        <taxon>Suina</taxon>
        <taxon>Suidae</taxon>
        <taxon>Sus</taxon>
    </lineage>
</organism>